<sequence length="348" mass="38688">MTAPSQVLKIRRPDDWHVHLRDGDMLKTVVPYTSEIYGRAIVMPNLASPITTVDAAIAYRQRILDAVPAGHDFTPLMTCYLTDSLDADELERGFHEGVFTAAKLYPANATTNSSHGVTSVDAIMPVLERMEKLGMPLLVHGEVTHADVDIFDREARFIDTVMEPLRQRLTTLKVVFEHITTKDAAQYVRDGNDYLAATITPQHLMFNRNDMLVGGIRPHLYCLPILKRNIHQQALRELVASGFTRAFLGTDSAPHSRHRKETSCGCAGCFNAPSALGSYAAVFEEMNALAHFEAFCSLNGPQFYGLPVNTGWVELVRDEQHVPENIALADDSLVPFLAGETVRWSVKK</sequence>
<organism>
    <name type="scientific">Salmonella newport (strain SL254)</name>
    <dbReference type="NCBI Taxonomy" id="423368"/>
    <lineage>
        <taxon>Bacteria</taxon>
        <taxon>Pseudomonadati</taxon>
        <taxon>Pseudomonadota</taxon>
        <taxon>Gammaproteobacteria</taxon>
        <taxon>Enterobacterales</taxon>
        <taxon>Enterobacteriaceae</taxon>
        <taxon>Salmonella</taxon>
    </lineage>
</organism>
<keyword id="KW-0378">Hydrolase</keyword>
<keyword id="KW-0479">Metal-binding</keyword>
<keyword id="KW-0665">Pyrimidine biosynthesis</keyword>
<keyword id="KW-0862">Zinc</keyword>
<comment type="function">
    <text evidence="1">Catalyzes the reversible cyclization of carbamoyl aspartate to dihydroorotate.</text>
</comment>
<comment type="catalytic activity">
    <reaction evidence="1">
        <text>(S)-dihydroorotate + H2O = N-carbamoyl-L-aspartate + H(+)</text>
        <dbReference type="Rhea" id="RHEA:24296"/>
        <dbReference type="ChEBI" id="CHEBI:15377"/>
        <dbReference type="ChEBI" id="CHEBI:15378"/>
        <dbReference type="ChEBI" id="CHEBI:30864"/>
        <dbReference type="ChEBI" id="CHEBI:32814"/>
        <dbReference type="EC" id="3.5.2.3"/>
    </reaction>
</comment>
<comment type="cofactor">
    <cofactor evidence="1">
        <name>Zn(2+)</name>
        <dbReference type="ChEBI" id="CHEBI:29105"/>
    </cofactor>
    <text evidence="1">Binds 2 Zn(2+) ions per subunit.</text>
</comment>
<comment type="pathway">
    <text evidence="1">Pyrimidine metabolism; UMP biosynthesis via de novo pathway; (S)-dihydroorotate from bicarbonate: step 3/3.</text>
</comment>
<comment type="subunit">
    <text evidence="1">Homodimer.</text>
</comment>
<comment type="similarity">
    <text evidence="1">Belongs to the metallo-dependent hydrolases superfamily. DHOase family. Class II DHOase subfamily.</text>
</comment>
<name>PYRC_SALNS</name>
<feature type="chain" id="PRO_1000100060" description="Dihydroorotase">
    <location>
        <begin position="1"/>
        <end position="348"/>
    </location>
</feature>
<feature type="active site" evidence="1">
    <location>
        <position position="251"/>
    </location>
</feature>
<feature type="binding site" evidence="1">
    <location>
        <position position="17"/>
    </location>
    <ligand>
        <name>Zn(2+)</name>
        <dbReference type="ChEBI" id="CHEBI:29105"/>
        <label>1</label>
    </ligand>
</feature>
<feature type="binding site" evidence="1">
    <location>
        <begin position="19"/>
        <end position="21"/>
    </location>
    <ligand>
        <name>substrate</name>
    </ligand>
</feature>
<feature type="binding site" evidence="1">
    <location>
        <position position="19"/>
    </location>
    <ligand>
        <name>Zn(2+)</name>
        <dbReference type="ChEBI" id="CHEBI:29105"/>
        <label>1</label>
    </ligand>
</feature>
<feature type="binding site" evidence="1">
    <location>
        <position position="45"/>
    </location>
    <ligand>
        <name>substrate</name>
    </ligand>
</feature>
<feature type="binding site" description="via carbamate group" evidence="1">
    <location>
        <position position="103"/>
    </location>
    <ligand>
        <name>Zn(2+)</name>
        <dbReference type="ChEBI" id="CHEBI:29105"/>
        <label>1</label>
    </ligand>
</feature>
<feature type="binding site" description="via carbamate group" evidence="1">
    <location>
        <position position="103"/>
    </location>
    <ligand>
        <name>Zn(2+)</name>
        <dbReference type="ChEBI" id="CHEBI:29105"/>
        <label>2</label>
    </ligand>
</feature>
<feature type="binding site" evidence="1">
    <location>
        <position position="140"/>
    </location>
    <ligand>
        <name>substrate</name>
    </ligand>
</feature>
<feature type="binding site" evidence="1">
    <location>
        <position position="140"/>
    </location>
    <ligand>
        <name>Zn(2+)</name>
        <dbReference type="ChEBI" id="CHEBI:29105"/>
        <label>2</label>
    </ligand>
</feature>
<feature type="binding site" evidence="1">
    <location>
        <position position="178"/>
    </location>
    <ligand>
        <name>Zn(2+)</name>
        <dbReference type="ChEBI" id="CHEBI:29105"/>
        <label>2</label>
    </ligand>
</feature>
<feature type="binding site" evidence="1">
    <location>
        <position position="223"/>
    </location>
    <ligand>
        <name>substrate</name>
    </ligand>
</feature>
<feature type="binding site" evidence="1">
    <location>
        <position position="251"/>
    </location>
    <ligand>
        <name>Zn(2+)</name>
        <dbReference type="ChEBI" id="CHEBI:29105"/>
        <label>1</label>
    </ligand>
</feature>
<feature type="binding site" evidence="1">
    <location>
        <position position="255"/>
    </location>
    <ligand>
        <name>substrate</name>
    </ligand>
</feature>
<feature type="binding site" evidence="1">
    <location>
        <position position="267"/>
    </location>
    <ligand>
        <name>substrate</name>
    </ligand>
</feature>
<feature type="modified residue" description="N6-carboxylysine" evidence="1">
    <location>
        <position position="103"/>
    </location>
</feature>
<gene>
    <name evidence="1" type="primary">pyrC</name>
    <name type="ordered locus">SNSL254_A1260</name>
</gene>
<evidence type="ECO:0000255" key="1">
    <source>
        <dbReference type="HAMAP-Rule" id="MF_00219"/>
    </source>
</evidence>
<reference key="1">
    <citation type="journal article" date="2011" name="J. Bacteriol.">
        <title>Comparative genomics of 28 Salmonella enterica isolates: evidence for CRISPR-mediated adaptive sublineage evolution.</title>
        <authorList>
            <person name="Fricke W.F."/>
            <person name="Mammel M.K."/>
            <person name="McDermott P.F."/>
            <person name="Tartera C."/>
            <person name="White D.G."/>
            <person name="Leclerc J.E."/>
            <person name="Ravel J."/>
            <person name="Cebula T.A."/>
        </authorList>
    </citation>
    <scope>NUCLEOTIDE SEQUENCE [LARGE SCALE GENOMIC DNA]</scope>
    <source>
        <strain>SL254</strain>
    </source>
</reference>
<accession>B4T2Z5</accession>
<protein>
    <recommendedName>
        <fullName evidence="1">Dihydroorotase</fullName>
        <shortName evidence="1">DHOase</shortName>
        <ecNumber evidence="1">3.5.2.3</ecNumber>
    </recommendedName>
</protein>
<dbReference type="EC" id="3.5.2.3" evidence="1"/>
<dbReference type="EMBL" id="CP001113">
    <property type="protein sequence ID" value="ACF64306.1"/>
    <property type="molecule type" value="Genomic_DNA"/>
</dbReference>
<dbReference type="RefSeq" id="WP_000126595.1">
    <property type="nucleotide sequence ID" value="NZ_CCMR01000003.1"/>
</dbReference>
<dbReference type="SMR" id="B4T2Z5"/>
<dbReference type="MEROPS" id="M38.A02"/>
<dbReference type="KEGG" id="see:SNSL254_A1260"/>
<dbReference type="HOGENOM" id="CLU_041558_1_0_6"/>
<dbReference type="UniPathway" id="UPA00070">
    <property type="reaction ID" value="UER00117"/>
</dbReference>
<dbReference type="Proteomes" id="UP000008824">
    <property type="component" value="Chromosome"/>
</dbReference>
<dbReference type="GO" id="GO:0005829">
    <property type="term" value="C:cytosol"/>
    <property type="evidence" value="ECO:0007669"/>
    <property type="project" value="TreeGrafter"/>
</dbReference>
<dbReference type="GO" id="GO:0004151">
    <property type="term" value="F:dihydroorotase activity"/>
    <property type="evidence" value="ECO:0007669"/>
    <property type="project" value="UniProtKB-UniRule"/>
</dbReference>
<dbReference type="GO" id="GO:0008270">
    <property type="term" value="F:zinc ion binding"/>
    <property type="evidence" value="ECO:0007669"/>
    <property type="project" value="UniProtKB-UniRule"/>
</dbReference>
<dbReference type="GO" id="GO:0006207">
    <property type="term" value="P:'de novo' pyrimidine nucleobase biosynthetic process"/>
    <property type="evidence" value="ECO:0007669"/>
    <property type="project" value="TreeGrafter"/>
</dbReference>
<dbReference type="GO" id="GO:0044205">
    <property type="term" value="P:'de novo' UMP biosynthetic process"/>
    <property type="evidence" value="ECO:0007669"/>
    <property type="project" value="UniProtKB-UniRule"/>
</dbReference>
<dbReference type="CDD" id="cd01294">
    <property type="entry name" value="DHOase"/>
    <property type="match status" value="1"/>
</dbReference>
<dbReference type="FunFam" id="3.20.20.140:FF:000006">
    <property type="entry name" value="Dihydroorotase"/>
    <property type="match status" value="1"/>
</dbReference>
<dbReference type="Gene3D" id="3.20.20.140">
    <property type="entry name" value="Metal-dependent hydrolases"/>
    <property type="match status" value="1"/>
</dbReference>
<dbReference type="HAMAP" id="MF_00219">
    <property type="entry name" value="PyrC_classII"/>
    <property type="match status" value="1"/>
</dbReference>
<dbReference type="InterPro" id="IPR006680">
    <property type="entry name" value="Amidohydro-rel"/>
</dbReference>
<dbReference type="InterPro" id="IPR004721">
    <property type="entry name" value="DHOdimr"/>
</dbReference>
<dbReference type="InterPro" id="IPR002195">
    <property type="entry name" value="Dihydroorotase_CS"/>
</dbReference>
<dbReference type="InterPro" id="IPR032466">
    <property type="entry name" value="Metal_Hydrolase"/>
</dbReference>
<dbReference type="NCBIfam" id="TIGR00856">
    <property type="entry name" value="pyrC_dimer"/>
    <property type="match status" value="1"/>
</dbReference>
<dbReference type="PANTHER" id="PTHR43137">
    <property type="entry name" value="DIHYDROOROTASE"/>
    <property type="match status" value="1"/>
</dbReference>
<dbReference type="PANTHER" id="PTHR43137:SF1">
    <property type="entry name" value="DIHYDROOROTASE"/>
    <property type="match status" value="1"/>
</dbReference>
<dbReference type="Pfam" id="PF01979">
    <property type="entry name" value="Amidohydro_1"/>
    <property type="match status" value="1"/>
</dbReference>
<dbReference type="PIRSF" id="PIRSF001237">
    <property type="entry name" value="DHOdimr"/>
    <property type="match status" value="1"/>
</dbReference>
<dbReference type="SUPFAM" id="SSF51556">
    <property type="entry name" value="Metallo-dependent hydrolases"/>
    <property type="match status" value="1"/>
</dbReference>
<dbReference type="PROSITE" id="PS00482">
    <property type="entry name" value="DIHYDROOROTASE_1"/>
    <property type="match status" value="1"/>
</dbReference>
<dbReference type="PROSITE" id="PS00483">
    <property type="entry name" value="DIHYDROOROTASE_2"/>
    <property type="match status" value="1"/>
</dbReference>
<proteinExistence type="inferred from homology"/>